<feature type="chain" id="PRO_0000375039" description="Ribosomal protein uS12 methylthiotransferase RimO">
    <location>
        <begin position="1"/>
        <end position="464"/>
    </location>
</feature>
<feature type="domain" description="MTTase N-terminal" evidence="1">
    <location>
        <begin position="14"/>
        <end position="125"/>
    </location>
</feature>
<feature type="domain" description="Radical SAM core" evidence="2">
    <location>
        <begin position="149"/>
        <end position="378"/>
    </location>
</feature>
<feature type="domain" description="TRAM" evidence="1">
    <location>
        <begin position="381"/>
        <end position="452"/>
    </location>
</feature>
<feature type="binding site" evidence="1">
    <location>
        <position position="23"/>
    </location>
    <ligand>
        <name>[4Fe-4S] cluster</name>
        <dbReference type="ChEBI" id="CHEBI:49883"/>
        <label>1</label>
    </ligand>
</feature>
<feature type="binding site" evidence="1">
    <location>
        <position position="59"/>
    </location>
    <ligand>
        <name>[4Fe-4S] cluster</name>
        <dbReference type="ChEBI" id="CHEBI:49883"/>
        <label>1</label>
    </ligand>
</feature>
<feature type="binding site" evidence="1">
    <location>
        <position position="88"/>
    </location>
    <ligand>
        <name>[4Fe-4S] cluster</name>
        <dbReference type="ChEBI" id="CHEBI:49883"/>
        <label>1</label>
    </ligand>
</feature>
<feature type="binding site" evidence="1">
    <location>
        <position position="163"/>
    </location>
    <ligand>
        <name>[4Fe-4S] cluster</name>
        <dbReference type="ChEBI" id="CHEBI:49883"/>
        <label>2</label>
        <note>4Fe-4S-S-AdoMet</note>
    </ligand>
</feature>
<feature type="binding site" evidence="1">
    <location>
        <position position="167"/>
    </location>
    <ligand>
        <name>[4Fe-4S] cluster</name>
        <dbReference type="ChEBI" id="CHEBI:49883"/>
        <label>2</label>
        <note>4Fe-4S-S-AdoMet</note>
    </ligand>
</feature>
<feature type="binding site" evidence="1">
    <location>
        <position position="170"/>
    </location>
    <ligand>
        <name>[4Fe-4S] cluster</name>
        <dbReference type="ChEBI" id="CHEBI:49883"/>
        <label>2</label>
        <note>4Fe-4S-S-AdoMet</note>
    </ligand>
</feature>
<reference key="1">
    <citation type="journal article" date="2003" name="Nature">
        <title>The genome of a motile marine Synechococcus.</title>
        <authorList>
            <person name="Palenik B."/>
            <person name="Brahamsha B."/>
            <person name="Larimer F.W."/>
            <person name="Land M.L."/>
            <person name="Hauser L."/>
            <person name="Chain P."/>
            <person name="Lamerdin J.E."/>
            <person name="Regala W."/>
            <person name="Allen E.E."/>
            <person name="McCarren J."/>
            <person name="Paulsen I.T."/>
            <person name="Dufresne A."/>
            <person name="Partensky F."/>
            <person name="Webb E.A."/>
            <person name="Waterbury J."/>
        </authorList>
    </citation>
    <scope>NUCLEOTIDE SEQUENCE [LARGE SCALE GENOMIC DNA]</scope>
    <source>
        <strain>WH8102</strain>
    </source>
</reference>
<dbReference type="EC" id="2.8.4.4" evidence="1"/>
<dbReference type="EMBL" id="BX569695">
    <property type="protein sequence ID" value="CAE08709.1"/>
    <property type="molecule type" value="Genomic_DNA"/>
</dbReference>
<dbReference type="SMR" id="Q7U477"/>
<dbReference type="STRING" id="84588.SYNW2194"/>
<dbReference type="KEGG" id="syw:SYNW2194"/>
<dbReference type="eggNOG" id="COG0621">
    <property type="taxonomic scope" value="Bacteria"/>
</dbReference>
<dbReference type="HOGENOM" id="CLU_018697_0_1_3"/>
<dbReference type="Proteomes" id="UP000001422">
    <property type="component" value="Chromosome"/>
</dbReference>
<dbReference type="GO" id="GO:0005829">
    <property type="term" value="C:cytosol"/>
    <property type="evidence" value="ECO:0007669"/>
    <property type="project" value="TreeGrafter"/>
</dbReference>
<dbReference type="GO" id="GO:0051539">
    <property type="term" value="F:4 iron, 4 sulfur cluster binding"/>
    <property type="evidence" value="ECO:0007669"/>
    <property type="project" value="UniProtKB-UniRule"/>
</dbReference>
<dbReference type="GO" id="GO:0035599">
    <property type="term" value="F:aspartic acid methylthiotransferase activity"/>
    <property type="evidence" value="ECO:0007669"/>
    <property type="project" value="TreeGrafter"/>
</dbReference>
<dbReference type="GO" id="GO:0046872">
    <property type="term" value="F:metal ion binding"/>
    <property type="evidence" value="ECO:0007669"/>
    <property type="project" value="UniProtKB-KW"/>
</dbReference>
<dbReference type="GO" id="GO:0103039">
    <property type="term" value="F:protein methylthiotransferase activity"/>
    <property type="evidence" value="ECO:0007669"/>
    <property type="project" value="UniProtKB-EC"/>
</dbReference>
<dbReference type="GO" id="GO:0006400">
    <property type="term" value="P:tRNA modification"/>
    <property type="evidence" value="ECO:0007669"/>
    <property type="project" value="InterPro"/>
</dbReference>
<dbReference type="CDD" id="cd01335">
    <property type="entry name" value="Radical_SAM"/>
    <property type="match status" value="1"/>
</dbReference>
<dbReference type="FunFam" id="3.80.30.20:FF:000001">
    <property type="entry name" value="tRNA-2-methylthio-N(6)-dimethylallyladenosine synthase 2"/>
    <property type="match status" value="1"/>
</dbReference>
<dbReference type="Gene3D" id="3.40.50.12160">
    <property type="entry name" value="Methylthiotransferase, N-terminal domain"/>
    <property type="match status" value="1"/>
</dbReference>
<dbReference type="Gene3D" id="2.40.50.140">
    <property type="entry name" value="Nucleic acid-binding proteins"/>
    <property type="match status" value="1"/>
</dbReference>
<dbReference type="Gene3D" id="3.80.30.20">
    <property type="entry name" value="tm_1862 like domain"/>
    <property type="match status" value="1"/>
</dbReference>
<dbReference type="HAMAP" id="MF_01865">
    <property type="entry name" value="MTTase_RimO"/>
    <property type="match status" value="1"/>
</dbReference>
<dbReference type="InterPro" id="IPR006638">
    <property type="entry name" value="Elp3/MiaA/NifB-like_rSAM"/>
</dbReference>
<dbReference type="InterPro" id="IPR005839">
    <property type="entry name" value="Methylthiotransferase"/>
</dbReference>
<dbReference type="InterPro" id="IPR020612">
    <property type="entry name" value="Methylthiotransferase_CS"/>
</dbReference>
<dbReference type="InterPro" id="IPR013848">
    <property type="entry name" value="Methylthiotransferase_N"/>
</dbReference>
<dbReference type="InterPro" id="IPR038135">
    <property type="entry name" value="Methylthiotransferase_N_sf"/>
</dbReference>
<dbReference type="InterPro" id="IPR012340">
    <property type="entry name" value="NA-bd_OB-fold"/>
</dbReference>
<dbReference type="InterPro" id="IPR005840">
    <property type="entry name" value="Ribosomal_uS12_MeSTrfase_RimO"/>
</dbReference>
<dbReference type="InterPro" id="IPR007197">
    <property type="entry name" value="rSAM"/>
</dbReference>
<dbReference type="InterPro" id="IPR023404">
    <property type="entry name" value="rSAM_horseshoe"/>
</dbReference>
<dbReference type="InterPro" id="IPR002792">
    <property type="entry name" value="TRAM_dom"/>
</dbReference>
<dbReference type="NCBIfam" id="TIGR01125">
    <property type="entry name" value="30S ribosomal protein S12 methylthiotransferase RimO"/>
    <property type="match status" value="1"/>
</dbReference>
<dbReference type="NCBIfam" id="TIGR00089">
    <property type="entry name" value="MiaB/RimO family radical SAM methylthiotransferase"/>
    <property type="match status" value="1"/>
</dbReference>
<dbReference type="PANTHER" id="PTHR43837">
    <property type="entry name" value="RIBOSOMAL PROTEIN S12 METHYLTHIOTRANSFERASE RIMO"/>
    <property type="match status" value="1"/>
</dbReference>
<dbReference type="PANTHER" id="PTHR43837:SF1">
    <property type="entry name" value="RIBOSOMAL PROTEIN US12 METHYLTHIOTRANSFERASE RIMO"/>
    <property type="match status" value="1"/>
</dbReference>
<dbReference type="Pfam" id="PF04055">
    <property type="entry name" value="Radical_SAM"/>
    <property type="match status" value="1"/>
</dbReference>
<dbReference type="Pfam" id="PF18693">
    <property type="entry name" value="TRAM_2"/>
    <property type="match status" value="1"/>
</dbReference>
<dbReference type="Pfam" id="PF00919">
    <property type="entry name" value="UPF0004"/>
    <property type="match status" value="1"/>
</dbReference>
<dbReference type="SFLD" id="SFLDG01082">
    <property type="entry name" value="B12-binding_domain_containing"/>
    <property type="match status" value="1"/>
</dbReference>
<dbReference type="SFLD" id="SFLDG01061">
    <property type="entry name" value="methylthiotransferase"/>
    <property type="match status" value="1"/>
</dbReference>
<dbReference type="SFLD" id="SFLDF00274">
    <property type="entry name" value="ribosomal_protein_S12_methylth"/>
    <property type="match status" value="1"/>
</dbReference>
<dbReference type="SMART" id="SM00729">
    <property type="entry name" value="Elp3"/>
    <property type="match status" value="1"/>
</dbReference>
<dbReference type="SUPFAM" id="SSF102114">
    <property type="entry name" value="Radical SAM enzymes"/>
    <property type="match status" value="1"/>
</dbReference>
<dbReference type="PROSITE" id="PS51449">
    <property type="entry name" value="MTTASE_N"/>
    <property type="match status" value="1"/>
</dbReference>
<dbReference type="PROSITE" id="PS01278">
    <property type="entry name" value="MTTASE_RADICAL"/>
    <property type="match status" value="1"/>
</dbReference>
<dbReference type="PROSITE" id="PS51918">
    <property type="entry name" value="RADICAL_SAM"/>
    <property type="match status" value="1"/>
</dbReference>
<dbReference type="PROSITE" id="PS50926">
    <property type="entry name" value="TRAM"/>
    <property type="match status" value="1"/>
</dbReference>
<accession>Q7U477</accession>
<comment type="function">
    <text evidence="1">Catalyzes the methylthiolation of an aspartic acid residue of ribosomal protein uS12.</text>
</comment>
<comment type="catalytic activity">
    <reaction evidence="1">
        <text>L-aspartate(89)-[ribosomal protein uS12]-hydrogen + (sulfur carrier)-SH + AH2 + 2 S-adenosyl-L-methionine = 3-methylsulfanyl-L-aspartate(89)-[ribosomal protein uS12]-hydrogen + (sulfur carrier)-H + 5'-deoxyadenosine + L-methionine + A + S-adenosyl-L-homocysteine + 2 H(+)</text>
        <dbReference type="Rhea" id="RHEA:37087"/>
        <dbReference type="Rhea" id="RHEA-COMP:10460"/>
        <dbReference type="Rhea" id="RHEA-COMP:10461"/>
        <dbReference type="Rhea" id="RHEA-COMP:14737"/>
        <dbReference type="Rhea" id="RHEA-COMP:14739"/>
        <dbReference type="ChEBI" id="CHEBI:13193"/>
        <dbReference type="ChEBI" id="CHEBI:15378"/>
        <dbReference type="ChEBI" id="CHEBI:17319"/>
        <dbReference type="ChEBI" id="CHEBI:17499"/>
        <dbReference type="ChEBI" id="CHEBI:29917"/>
        <dbReference type="ChEBI" id="CHEBI:29961"/>
        <dbReference type="ChEBI" id="CHEBI:57844"/>
        <dbReference type="ChEBI" id="CHEBI:57856"/>
        <dbReference type="ChEBI" id="CHEBI:59789"/>
        <dbReference type="ChEBI" id="CHEBI:64428"/>
        <dbReference type="ChEBI" id="CHEBI:73599"/>
        <dbReference type="EC" id="2.8.4.4"/>
    </reaction>
</comment>
<comment type="cofactor">
    <cofactor evidence="1">
        <name>[4Fe-4S] cluster</name>
        <dbReference type="ChEBI" id="CHEBI:49883"/>
    </cofactor>
    <text evidence="1">Binds 2 [4Fe-4S] clusters. One cluster is coordinated with 3 cysteines and an exchangeable S-adenosyl-L-methionine.</text>
</comment>
<comment type="subcellular location">
    <subcellularLocation>
        <location evidence="1">Cytoplasm</location>
    </subcellularLocation>
</comment>
<comment type="similarity">
    <text evidence="1">Belongs to the methylthiotransferase family. RimO subfamily.</text>
</comment>
<gene>
    <name evidence="1" type="primary">rimO</name>
    <name type="ordered locus">SYNW2194</name>
</gene>
<evidence type="ECO:0000255" key="1">
    <source>
        <dbReference type="HAMAP-Rule" id="MF_01865"/>
    </source>
</evidence>
<evidence type="ECO:0000255" key="2">
    <source>
        <dbReference type="PROSITE-ProRule" id="PRU01266"/>
    </source>
</evidence>
<name>RIMO_PARMW</name>
<proteinExistence type="inferred from homology"/>
<keyword id="KW-0004">4Fe-4S</keyword>
<keyword id="KW-0963">Cytoplasm</keyword>
<keyword id="KW-0408">Iron</keyword>
<keyword id="KW-0411">Iron-sulfur</keyword>
<keyword id="KW-0479">Metal-binding</keyword>
<keyword id="KW-0949">S-adenosyl-L-methionine</keyword>
<keyword id="KW-0808">Transferase</keyword>
<sequence length="464" mass="50995">MAGGAVMTSTPTKPTVAFAHLGCEKNRVDTEHMVGLLAQAGYGVSTNENDAAVVVVNTCSFIQDAREESVRTLVGLAEQGKELIIAGCLAQHFQDELLESIPEAKAIVGTGDYQHIVEVLQRVEAGERVNRVSAVPTFVGDEHLPRQRTTDQAVAFLKVAEGCDYRCAFCIIPKLRGDQRSRPIESIVAEAHQLVEQGVQELILISQITTNYGLDLYGKPKLAELLRALGEVEIPWIRVHYAYPTGLTPEVLAAYREVPNVVPYLDLPLQHSHPEVLRAMNRPWQADVNDRLLDQIRDQLPDAVLRTTLIVGFPGETEEHFQHLMEFLRRQRFDHVGVFTFSPEDGTAAAELPNPVDPDVAQARKDALMALQQPISAERNHSWVSRTVDVLIEQHNPQTGQMIGRCARFAPEVDGEVHVQPGEDGQKAAPGTMVPVQITGADVYDLSGRIVGARDMVAAIRADA</sequence>
<protein>
    <recommendedName>
        <fullName evidence="1">Ribosomal protein uS12 methylthiotransferase RimO</fullName>
        <shortName evidence="1">uS12 MTTase</shortName>
        <shortName evidence="1">uS12 methylthiotransferase</shortName>
        <ecNumber evidence="1">2.8.4.4</ecNumber>
    </recommendedName>
    <alternativeName>
        <fullName evidence="1">Ribosomal protein uS12 (aspartate-C(3))-methylthiotransferase</fullName>
    </alternativeName>
    <alternativeName>
        <fullName evidence="1">Ribosome maturation factor RimO</fullName>
    </alternativeName>
</protein>
<organism>
    <name type="scientific">Parasynechococcus marenigrum (strain WH8102)</name>
    <dbReference type="NCBI Taxonomy" id="84588"/>
    <lineage>
        <taxon>Bacteria</taxon>
        <taxon>Bacillati</taxon>
        <taxon>Cyanobacteriota</taxon>
        <taxon>Cyanophyceae</taxon>
        <taxon>Synechococcales</taxon>
        <taxon>Prochlorococcaceae</taxon>
        <taxon>Parasynechococcus</taxon>
        <taxon>Parasynechococcus marenigrum</taxon>
    </lineage>
</organism>